<feature type="chain" id="PRO_1000088644" description="Tyrosine--tRNA ligase">
    <location>
        <begin position="1"/>
        <end position="424"/>
    </location>
</feature>
<feature type="domain" description="S4 RNA-binding" evidence="1">
    <location>
        <begin position="357"/>
        <end position="414"/>
    </location>
</feature>
<feature type="short sequence motif" description="'HIGH' region">
    <location>
        <begin position="42"/>
        <end position="51"/>
    </location>
</feature>
<feature type="short sequence motif" description="'KMSKS' region">
    <location>
        <begin position="235"/>
        <end position="239"/>
    </location>
</feature>
<feature type="binding site" evidence="1">
    <location>
        <position position="37"/>
    </location>
    <ligand>
        <name>L-tyrosine</name>
        <dbReference type="ChEBI" id="CHEBI:58315"/>
    </ligand>
</feature>
<feature type="binding site" evidence="1">
    <location>
        <position position="175"/>
    </location>
    <ligand>
        <name>L-tyrosine</name>
        <dbReference type="ChEBI" id="CHEBI:58315"/>
    </ligand>
</feature>
<feature type="binding site" evidence="1">
    <location>
        <position position="179"/>
    </location>
    <ligand>
        <name>L-tyrosine</name>
        <dbReference type="ChEBI" id="CHEBI:58315"/>
    </ligand>
</feature>
<feature type="binding site" evidence="1">
    <location>
        <position position="238"/>
    </location>
    <ligand>
        <name>ATP</name>
        <dbReference type="ChEBI" id="CHEBI:30616"/>
    </ligand>
</feature>
<comment type="function">
    <text evidence="1">Catalyzes the attachment of tyrosine to tRNA(Tyr) in a two-step reaction: tyrosine is first activated by ATP to form Tyr-AMP and then transferred to the acceptor end of tRNA(Tyr).</text>
</comment>
<comment type="catalytic activity">
    <reaction evidence="1">
        <text>tRNA(Tyr) + L-tyrosine + ATP = L-tyrosyl-tRNA(Tyr) + AMP + diphosphate + H(+)</text>
        <dbReference type="Rhea" id="RHEA:10220"/>
        <dbReference type="Rhea" id="RHEA-COMP:9706"/>
        <dbReference type="Rhea" id="RHEA-COMP:9707"/>
        <dbReference type="ChEBI" id="CHEBI:15378"/>
        <dbReference type="ChEBI" id="CHEBI:30616"/>
        <dbReference type="ChEBI" id="CHEBI:33019"/>
        <dbReference type="ChEBI" id="CHEBI:58315"/>
        <dbReference type="ChEBI" id="CHEBI:78442"/>
        <dbReference type="ChEBI" id="CHEBI:78536"/>
        <dbReference type="ChEBI" id="CHEBI:456215"/>
        <dbReference type="EC" id="6.1.1.1"/>
    </reaction>
</comment>
<comment type="subunit">
    <text evidence="1">Homodimer.</text>
</comment>
<comment type="subcellular location">
    <subcellularLocation>
        <location evidence="1">Cytoplasm</location>
    </subcellularLocation>
</comment>
<comment type="similarity">
    <text evidence="1">Belongs to the class-I aminoacyl-tRNA synthetase family. TyrS type 1 subfamily.</text>
</comment>
<name>SYY_YERPA</name>
<keyword id="KW-0030">Aminoacyl-tRNA synthetase</keyword>
<keyword id="KW-0067">ATP-binding</keyword>
<keyword id="KW-0963">Cytoplasm</keyword>
<keyword id="KW-0436">Ligase</keyword>
<keyword id="KW-0547">Nucleotide-binding</keyword>
<keyword id="KW-0648">Protein biosynthesis</keyword>
<keyword id="KW-0694">RNA-binding</keyword>
<proteinExistence type="inferred from homology"/>
<evidence type="ECO:0000255" key="1">
    <source>
        <dbReference type="HAMAP-Rule" id="MF_02006"/>
    </source>
</evidence>
<dbReference type="EC" id="6.1.1.1" evidence="1"/>
<dbReference type="EMBL" id="CP000308">
    <property type="protein sequence ID" value="ABG13681.1"/>
    <property type="molecule type" value="Genomic_DNA"/>
</dbReference>
<dbReference type="RefSeq" id="WP_002210960.1">
    <property type="nucleotide sequence ID" value="NZ_CP009906.1"/>
</dbReference>
<dbReference type="SMR" id="Q1C791"/>
<dbReference type="GeneID" id="57976306"/>
<dbReference type="KEGG" id="ypa:YPA_1715"/>
<dbReference type="Proteomes" id="UP000001971">
    <property type="component" value="Chromosome"/>
</dbReference>
<dbReference type="GO" id="GO:0005829">
    <property type="term" value="C:cytosol"/>
    <property type="evidence" value="ECO:0007669"/>
    <property type="project" value="TreeGrafter"/>
</dbReference>
<dbReference type="GO" id="GO:0005524">
    <property type="term" value="F:ATP binding"/>
    <property type="evidence" value="ECO:0007669"/>
    <property type="project" value="UniProtKB-UniRule"/>
</dbReference>
<dbReference type="GO" id="GO:0003723">
    <property type="term" value="F:RNA binding"/>
    <property type="evidence" value="ECO:0007669"/>
    <property type="project" value="UniProtKB-KW"/>
</dbReference>
<dbReference type="GO" id="GO:0004831">
    <property type="term" value="F:tyrosine-tRNA ligase activity"/>
    <property type="evidence" value="ECO:0007669"/>
    <property type="project" value="UniProtKB-UniRule"/>
</dbReference>
<dbReference type="GO" id="GO:0006437">
    <property type="term" value="P:tyrosyl-tRNA aminoacylation"/>
    <property type="evidence" value="ECO:0007669"/>
    <property type="project" value="UniProtKB-UniRule"/>
</dbReference>
<dbReference type="CDD" id="cd00165">
    <property type="entry name" value="S4"/>
    <property type="match status" value="1"/>
</dbReference>
<dbReference type="CDD" id="cd00805">
    <property type="entry name" value="TyrRS_core"/>
    <property type="match status" value="1"/>
</dbReference>
<dbReference type="FunFam" id="1.10.240.10:FF:000001">
    <property type="entry name" value="Tyrosine--tRNA ligase"/>
    <property type="match status" value="1"/>
</dbReference>
<dbReference type="FunFam" id="3.10.290.10:FF:000007">
    <property type="entry name" value="Tyrosine--tRNA ligase"/>
    <property type="match status" value="1"/>
</dbReference>
<dbReference type="FunFam" id="3.40.50.620:FF:000008">
    <property type="entry name" value="Tyrosine--tRNA ligase"/>
    <property type="match status" value="1"/>
</dbReference>
<dbReference type="Gene3D" id="3.40.50.620">
    <property type="entry name" value="HUPs"/>
    <property type="match status" value="1"/>
</dbReference>
<dbReference type="Gene3D" id="3.10.290.10">
    <property type="entry name" value="RNA-binding S4 domain"/>
    <property type="match status" value="1"/>
</dbReference>
<dbReference type="Gene3D" id="1.10.240.10">
    <property type="entry name" value="Tyrosyl-Transfer RNA Synthetase"/>
    <property type="match status" value="1"/>
</dbReference>
<dbReference type="HAMAP" id="MF_02006">
    <property type="entry name" value="Tyr_tRNA_synth_type1"/>
    <property type="match status" value="1"/>
</dbReference>
<dbReference type="InterPro" id="IPR001412">
    <property type="entry name" value="aa-tRNA-synth_I_CS"/>
</dbReference>
<dbReference type="InterPro" id="IPR002305">
    <property type="entry name" value="aa-tRNA-synth_Ic"/>
</dbReference>
<dbReference type="InterPro" id="IPR014729">
    <property type="entry name" value="Rossmann-like_a/b/a_fold"/>
</dbReference>
<dbReference type="InterPro" id="IPR002942">
    <property type="entry name" value="S4_RNA-bd"/>
</dbReference>
<dbReference type="InterPro" id="IPR036986">
    <property type="entry name" value="S4_RNA-bd_sf"/>
</dbReference>
<dbReference type="InterPro" id="IPR054608">
    <property type="entry name" value="SYY-like_C"/>
</dbReference>
<dbReference type="InterPro" id="IPR002307">
    <property type="entry name" value="Tyr-tRNA-ligase"/>
</dbReference>
<dbReference type="InterPro" id="IPR024088">
    <property type="entry name" value="Tyr-tRNA-ligase_bac-type"/>
</dbReference>
<dbReference type="InterPro" id="IPR024107">
    <property type="entry name" value="Tyr-tRNA-ligase_bac_1"/>
</dbReference>
<dbReference type="NCBIfam" id="TIGR00234">
    <property type="entry name" value="tyrS"/>
    <property type="match status" value="1"/>
</dbReference>
<dbReference type="PANTHER" id="PTHR11766:SF0">
    <property type="entry name" value="TYROSINE--TRNA LIGASE, MITOCHONDRIAL"/>
    <property type="match status" value="1"/>
</dbReference>
<dbReference type="PANTHER" id="PTHR11766">
    <property type="entry name" value="TYROSYL-TRNA SYNTHETASE"/>
    <property type="match status" value="1"/>
</dbReference>
<dbReference type="Pfam" id="PF22421">
    <property type="entry name" value="SYY_C-terminal"/>
    <property type="match status" value="1"/>
</dbReference>
<dbReference type="Pfam" id="PF00579">
    <property type="entry name" value="tRNA-synt_1b"/>
    <property type="match status" value="1"/>
</dbReference>
<dbReference type="PRINTS" id="PR01040">
    <property type="entry name" value="TRNASYNTHTYR"/>
</dbReference>
<dbReference type="SMART" id="SM00363">
    <property type="entry name" value="S4"/>
    <property type="match status" value="1"/>
</dbReference>
<dbReference type="SUPFAM" id="SSF55174">
    <property type="entry name" value="Alpha-L RNA-binding motif"/>
    <property type="match status" value="1"/>
</dbReference>
<dbReference type="SUPFAM" id="SSF52374">
    <property type="entry name" value="Nucleotidylyl transferase"/>
    <property type="match status" value="1"/>
</dbReference>
<dbReference type="PROSITE" id="PS00178">
    <property type="entry name" value="AA_TRNA_LIGASE_I"/>
    <property type="match status" value="1"/>
</dbReference>
<dbReference type="PROSITE" id="PS50889">
    <property type="entry name" value="S4"/>
    <property type="match status" value="1"/>
</dbReference>
<gene>
    <name evidence="1" type="primary">tyrS</name>
    <name type="ordered locus">YPA_1715</name>
</gene>
<sequence>MTSSNLIKQLQERGLVAQVTDEDALAERLAQGPISLYCGFDPTADSLHLGHLVPLLCLKRFQLAGHRPVALVGGATGMIGDPSFKASERKLNTEDTVNEWVEKIRHQVSPFLDFDCGENSAIAANNYDWFGGMNVLTFLRDIGKHFSVNQMINKEAVKQRLNRDDSGISFTEFSYNLLQAYDFACLNKNHGVALQIGGSDQWGNITSGIDLTRRLHQQQVYGLTVPLITKADGTKFGKTEGGAVWLDPKKTSPYKFYQFWINTADADVYRFLKFFTFMSLEEINALEEEDKNSGKAPRAQYVLAENVTGMVHGPEGLAAAKRITDSLFSGDLHDMTEADFAQLAQDGMPTVELNRDADLQQALVNAELVPSRGQARTMIGSNAVAINGEKQADPEYVFTDADRLFGRYTLLRRGKKHYCLISWL</sequence>
<protein>
    <recommendedName>
        <fullName evidence="1">Tyrosine--tRNA ligase</fullName>
        <ecNumber evidence="1">6.1.1.1</ecNumber>
    </recommendedName>
    <alternativeName>
        <fullName evidence="1">Tyrosyl-tRNA synthetase</fullName>
        <shortName evidence="1">TyrRS</shortName>
    </alternativeName>
</protein>
<organism>
    <name type="scientific">Yersinia pestis bv. Antiqua (strain Antiqua)</name>
    <dbReference type="NCBI Taxonomy" id="360102"/>
    <lineage>
        <taxon>Bacteria</taxon>
        <taxon>Pseudomonadati</taxon>
        <taxon>Pseudomonadota</taxon>
        <taxon>Gammaproteobacteria</taxon>
        <taxon>Enterobacterales</taxon>
        <taxon>Yersiniaceae</taxon>
        <taxon>Yersinia</taxon>
    </lineage>
</organism>
<accession>Q1C791</accession>
<reference key="1">
    <citation type="journal article" date="2006" name="J. Bacteriol.">
        <title>Complete genome sequence of Yersinia pestis strains Antiqua and Nepal516: evidence of gene reduction in an emerging pathogen.</title>
        <authorList>
            <person name="Chain P.S.G."/>
            <person name="Hu P."/>
            <person name="Malfatti S.A."/>
            <person name="Radnedge L."/>
            <person name="Larimer F."/>
            <person name="Vergez L.M."/>
            <person name="Worsham P."/>
            <person name="Chu M.C."/>
            <person name="Andersen G.L."/>
        </authorList>
    </citation>
    <scope>NUCLEOTIDE SEQUENCE [LARGE SCALE GENOMIC DNA]</scope>
    <source>
        <strain>Antiqua</strain>
    </source>
</reference>